<organism>
    <name type="scientific">Ostreococcus tauri</name>
    <dbReference type="NCBI Taxonomy" id="70448"/>
    <lineage>
        <taxon>Eukaryota</taxon>
        <taxon>Viridiplantae</taxon>
        <taxon>Chlorophyta</taxon>
        <taxon>Mamiellophyceae</taxon>
        <taxon>Mamiellales</taxon>
        <taxon>Bathycoccaceae</taxon>
        <taxon>Ostreococcus</taxon>
    </lineage>
</organism>
<protein>
    <recommendedName>
        <fullName>Cyclin-D</fullName>
    </recommendedName>
</protein>
<comment type="similarity">
    <text evidence="1">Belongs to the cyclin family. Cyclin D subfamily.</text>
</comment>
<dbReference type="EMBL" id="AY675099">
    <property type="protein sequence ID" value="AAV68601.1"/>
    <property type="molecule type" value="Genomic_DNA"/>
</dbReference>
<dbReference type="EMBL" id="CAID01000018">
    <property type="protein sequence ID" value="CEG00769.1"/>
    <property type="molecule type" value="Genomic_DNA"/>
</dbReference>
<dbReference type="SMR" id="Q5SCB5"/>
<dbReference type="STRING" id="70448.Q5SCB5"/>
<dbReference type="eggNOG" id="KOG0653">
    <property type="taxonomic scope" value="Eukaryota"/>
</dbReference>
<dbReference type="InParanoid" id="Q5SCB5"/>
<dbReference type="OrthoDB" id="2013528at2759"/>
<dbReference type="Proteomes" id="UP000009170">
    <property type="component" value="Chromosome 18"/>
</dbReference>
<dbReference type="GO" id="GO:0051301">
    <property type="term" value="P:cell division"/>
    <property type="evidence" value="ECO:0007669"/>
    <property type="project" value="UniProtKB-KW"/>
</dbReference>
<dbReference type="CDD" id="cd20529">
    <property type="entry name" value="CYCLIN_CCNJ-like_rpt2"/>
    <property type="match status" value="1"/>
</dbReference>
<dbReference type="FunFam" id="1.10.472.10:FF:000010">
    <property type="entry name" value="G1/S-specific cyclin Cln1"/>
    <property type="match status" value="1"/>
</dbReference>
<dbReference type="Gene3D" id="1.10.472.10">
    <property type="entry name" value="Cyclin-like"/>
    <property type="match status" value="2"/>
</dbReference>
<dbReference type="InterPro" id="IPR039361">
    <property type="entry name" value="Cyclin"/>
</dbReference>
<dbReference type="InterPro" id="IPR013763">
    <property type="entry name" value="Cyclin-like_dom"/>
</dbReference>
<dbReference type="InterPro" id="IPR036915">
    <property type="entry name" value="Cyclin-like_sf"/>
</dbReference>
<dbReference type="InterPro" id="IPR004367">
    <property type="entry name" value="Cyclin_C-dom"/>
</dbReference>
<dbReference type="InterPro" id="IPR006671">
    <property type="entry name" value="Cyclin_N"/>
</dbReference>
<dbReference type="PANTHER" id="PTHR10177">
    <property type="entry name" value="CYCLINS"/>
    <property type="match status" value="1"/>
</dbReference>
<dbReference type="Pfam" id="PF02984">
    <property type="entry name" value="Cyclin_C"/>
    <property type="match status" value="1"/>
</dbReference>
<dbReference type="Pfam" id="PF00134">
    <property type="entry name" value="Cyclin_N"/>
    <property type="match status" value="1"/>
</dbReference>
<dbReference type="SMART" id="SM00385">
    <property type="entry name" value="CYCLIN"/>
    <property type="match status" value="2"/>
</dbReference>
<dbReference type="SMART" id="SM01332">
    <property type="entry name" value="Cyclin_C"/>
    <property type="match status" value="1"/>
</dbReference>
<dbReference type="SUPFAM" id="SSF47954">
    <property type="entry name" value="Cyclin-like"/>
    <property type="match status" value="2"/>
</dbReference>
<gene>
    <name type="primary">CycD</name>
    <name evidence="2" type="ordered locus">Ot18g01570</name>
</gene>
<keyword id="KW-0131">Cell cycle</keyword>
<keyword id="KW-0132">Cell division</keyword>
<keyword id="KW-0195">Cyclin</keyword>
<keyword id="KW-1185">Reference proteome</keyword>
<feature type="chain" id="PRO_0000080448" description="Cyclin-D">
    <location>
        <begin position="1"/>
        <end position="374"/>
    </location>
</feature>
<reference key="1">
    <citation type="journal article" date="2005" name="Mol. Biol. Evol.">
        <title>Genome-wide analysis of core cell cycle genes in the unicellular green alga Ostreococcus tauri.</title>
        <authorList>
            <person name="Robbens S."/>
            <person name="Khadaroo B."/>
            <person name="Camasses A."/>
            <person name="Derelle E."/>
            <person name="Ferraz C."/>
            <person name="Inze D."/>
            <person name="Van de Peer Y."/>
            <person name="Moreau H."/>
        </authorList>
    </citation>
    <scope>NUCLEOTIDE SEQUENCE [GENOMIC DNA]</scope>
    <source>
        <strain>OTTH0595</strain>
    </source>
</reference>
<reference key="2">
    <citation type="journal article" date="2006" name="Proc. Natl. Acad. Sci. U.S.A.">
        <title>Genome analysis of the smallest free-living eukaryote Ostreococcus tauri unveils many unique features.</title>
        <authorList>
            <person name="Derelle E."/>
            <person name="Ferraz C."/>
            <person name="Rombauts S."/>
            <person name="Rouze P."/>
            <person name="Worden A.Z."/>
            <person name="Robbens S."/>
            <person name="Partensky F."/>
            <person name="Degroeve S."/>
            <person name="Echeynie S."/>
            <person name="Cooke R."/>
            <person name="Saeys Y."/>
            <person name="Wuyts J."/>
            <person name="Jabbari K."/>
            <person name="Bowler C."/>
            <person name="Panaud O."/>
            <person name="Piegu B."/>
            <person name="Ball S.G."/>
            <person name="Ral J.-P."/>
            <person name="Bouget F.-Y."/>
            <person name="Piganeau G."/>
            <person name="De Baets B."/>
            <person name="Picard A."/>
            <person name="Delseny M."/>
            <person name="Demaille J."/>
            <person name="Van de Peer Y."/>
            <person name="Moreau H."/>
        </authorList>
    </citation>
    <scope>NUCLEOTIDE SEQUENCE [LARGE SCALE GENOMIC DNA]</scope>
    <source>
        <strain>OTTH0595</strain>
    </source>
</reference>
<sequence>MNRSRTSSFSTDRSASTVALAPDGDYERERVSALASWPEYAVDALRSEQDFIVHQSAALWTHRTPALHDPDSQETQLDVAKGLLARERETHGSFVFDARAAHHCAFRSQLVEWILDVCAGERFGPTTADVAIAYTDRVLSKTVVPKTSLHLVALCCLHIAVKYEEIEERVPTMSKLRSWTSNMYSPEIIRKMELAVLIELGWDLGVLTPAHFLESFLALTNGGISDGDDIEHGDAYKERYREELRYFVCQLYSLCVQDTSLLNQPPSQIASAVIATARVHLGVKPMCSPELRAAGNVTPQQIYPLVAHMLKLWDEACAEDEAMDEVETSAEFNSLTIQVPKPIGHDIVSKMGYEHRVTENASPTCPFDMQWDEE</sequence>
<evidence type="ECO:0000305" key="1"/>
<evidence type="ECO:0000312" key="2">
    <source>
        <dbReference type="EMBL" id="CEG00769.1"/>
    </source>
</evidence>
<name>CCND_OSTTA</name>
<accession>Q5SCB5</accession>
<accession>A0A096P996</accession>
<accession>Q00SJ8</accession>
<proteinExistence type="inferred from homology"/>